<keyword id="KW-1185">Reference proteome</keyword>
<keyword id="KW-0687">Ribonucleoprotein</keyword>
<keyword id="KW-0689">Ribosomal protein</keyword>
<dbReference type="EMBL" id="CP000559">
    <property type="protein sequence ID" value="ABN07406.1"/>
    <property type="molecule type" value="Genomic_DNA"/>
</dbReference>
<dbReference type="RefSeq" id="WP_011833609.1">
    <property type="nucleotide sequence ID" value="NC_008942.1"/>
</dbReference>
<dbReference type="SMR" id="A2SSV0"/>
<dbReference type="STRING" id="410358.Mlab_1237"/>
<dbReference type="GeneID" id="4794940"/>
<dbReference type="KEGG" id="mla:Mlab_1237"/>
<dbReference type="eggNOG" id="arCOG04245">
    <property type="taxonomic scope" value="Archaea"/>
</dbReference>
<dbReference type="HOGENOM" id="CLU_058171_3_0_2"/>
<dbReference type="OrthoDB" id="371797at2157"/>
<dbReference type="Proteomes" id="UP000000365">
    <property type="component" value="Chromosome"/>
</dbReference>
<dbReference type="GO" id="GO:0015935">
    <property type="term" value="C:small ribosomal subunit"/>
    <property type="evidence" value="ECO:0007669"/>
    <property type="project" value="InterPro"/>
</dbReference>
<dbReference type="GO" id="GO:0003735">
    <property type="term" value="F:structural constituent of ribosome"/>
    <property type="evidence" value="ECO:0007669"/>
    <property type="project" value="InterPro"/>
</dbReference>
<dbReference type="GO" id="GO:0006412">
    <property type="term" value="P:translation"/>
    <property type="evidence" value="ECO:0007669"/>
    <property type="project" value="UniProtKB-UniRule"/>
</dbReference>
<dbReference type="FunFam" id="3.40.50.10490:FF:000030">
    <property type="entry name" value="30S ribosomal protein S2"/>
    <property type="match status" value="1"/>
</dbReference>
<dbReference type="Gene3D" id="3.40.50.10490">
    <property type="entry name" value="Glucose-6-phosphate isomerase like protein, domain 1"/>
    <property type="match status" value="1"/>
</dbReference>
<dbReference type="HAMAP" id="MF_00291_A">
    <property type="entry name" value="Ribosomal_uS2_A"/>
    <property type="match status" value="1"/>
</dbReference>
<dbReference type="InterPro" id="IPR001865">
    <property type="entry name" value="Ribosomal_uS2"/>
</dbReference>
<dbReference type="InterPro" id="IPR023454">
    <property type="entry name" value="Ribosomal_uS2_arc"/>
</dbReference>
<dbReference type="InterPro" id="IPR018130">
    <property type="entry name" value="Ribosomal_uS2_CS"/>
</dbReference>
<dbReference type="InterPro" id="IPR005707">
    <property type="entry name" value="Ribosomal_uS2_euk/arc"/>
</dbReference>
<dbReference type="InterPro" id="IPR023591">
    <property type="entry name" value="Ribosomal_uS2_flav_dom_sf"/>
</dbReference>
<dbReference type="NCBIfam" id="TIGR01012">
    <property type="entry name" value="uS2_euk_arch"/>
    <property type="match status" value="1"/>
</dbReference>
<dbReference type="PANTHER" id="PTHR11489">
    <property type="entry name" value="40S RIBOSOMAL PROTEIN SA"/>
    <property type="match status" value="1"/>
</dbReference>
<dbReference type="Pfam" id="PF00318">
    <property type="entry name" value="Ribosomal_S2"/>
    <property type="match status" value="2"/>
</dbReference>
<dbReference type="PRINTS" id="PR00395">
    <property type="entry name" value="RIBOSOMALS2"/>
</dbReference>
<dbReference type="SUPFAM" id="SSF52313">
    <property type="entry name" value="Ribosomal protein S2"/>
    <property type="match status" value="1"/>
</dbReference>
<dbReference type="PROSITE" id="PS00962">
    <property type="entry name" value="RIBOSOMAL_S2_1"/>
    <property type="match status" value="1"/>
</dbReference>
<dbReference type="PROSITE" id="PS00963">
    <property type="entry name" value="RIBOSOMAL_S2_2"/>
    <property type="match status" value="1"/>
</dbReference>
<feature type="chain" id="PRO_0000352067" description="Small ribosomal subunit protein uS2">
    <location>
        <begin position="1"/>
        <end position="202"/>
    </location>
</feature>
<name>RS2_METLZ</name>
<accession>A2SSV0</accession>
<proteinExistence type="inferred from homology"/>
<organism>
    <name type="scientific">Methanocorpusculum labreanum (strain ATCC 43576 / DSM 4855 / Z)</name>
    <dbReference type="NCBI Taxonomy" id="410358"/>
    <lineage>
        <taxon>Archaea</taxon>
        <taxon>Methanobacteriati</taxon>
        <taxon>Methanobacteriota</taxon>
        <taxon>Stenosarchaea group</taxon>
        <taxon>Methanomicrobia</taxon>
        <taxon>Methanomicrobiales</taxon>
        <taxon>Methanocorpusculaceae</taxon>
        <taxon>Methanocorpusculum</taxon>
    </lineage>
</organism>
<gene>
    <name evidence="1" type="primary">rps2</name>
    <name type="ordered locus">Mlab_1237</name>
</gene>
<protein>
    <recommendedName>
        <fullName evidence="1">Small ribosomal subunit protein uS2</fullName>
    </recommendedName>
    <alternativeName>
        <fullName evidence="2">30S ribosomal protein S2</fullName>
    </alternativeName>
</protein>
<sequence length="202" mass="22676">MTDNELGIELNEPLVSVEEYLAAGVHIGTQQKDNDMKDFIYRVRSDGLYIIDIRKTDERIKQVAKFLARYEPAKIFVVTSRQYGQYPAQKFADTIGALSHVGRFIPGTLTNPKLPKYVEPSVVIVTDPIGDAQVITEAVQCGMPVIALCDINNRTNNVDLVIPTNNKGRKALSMVYFLLTKEFLRQKGIVSAMTVEDFESEF</sequence>
<reference key="1">
    <citation type="journal article" date="2009" name="Stand. Genomic Sci.">
        <title>Complete genome sequence of Methanocorpusculum labreanum type strain Z.</title>
        <authorList>
            <person name="Anderson I.J."/>
            <person name="Sieprawska-Lupa M."/>
            <person name="Goltsman E."/>
            <person name="Lapidus A."/>
            <person name="Copeland A."/>
            <person name="Glavina Del Rio T."/>
            <person name="Tice H."/>
            <person name="Dalin E."/>
            <person name="Barry K."/>
            <person name="Pitluck S."/>
            <person name="Hauser L."/>
            <person name="Land M."/>
            <person name="Lucas S."/>
            <person name="Richardson P."/>
            <person name="Whitman W.B."/>
            <person name="Kyrpides N.C."/>
        </authorList>
    </citation>
    <scope>NUCLEOTIDE SEQUENCE [LARGE SCALE GENOMIC DNA]</scope>
    <source>
        <strain>ATCC 43576 / DSM 4855 / Z</strain>
    </source>
</reference>
<evidence type="ECO:0000255" key="1">
    <source>
        <dbReference type="HAMAP-Rule" id="MF_00291"/>
    </source>
</evidence>
<evidence type="ECO:0000305" key="2"/>
<comment type="similarity">
    <text evidence="1">Belongs to the universal ribosomal protein uS2 family.</text>
</comment>